<accession>Q55469</accession>
<feature type="chain" id="PRO_0000101961" description="UDP-N-acetylmuramoyl-L-alanyl-D-glutamate--2,6-diaminopimelate ligase">
    <location>
        <begin position="1"/>
        <end position="505"/>
    </location>
</feature>
<feature type="short sequence motif" description="Meso-diaminopimelate recognition motif">
    <location>
        <begin position="423"/>
        <end position="426"/>
    </location>
</feature>
<feature type="binding site" evidence="1">
    <location>
        <position position="42"/>
    </location>
    <ligand>
        <name>UDP-N-acetyl-alpha-D-muramoyl-L-alanyl-D-glutamate</name>
        <dbReference type="ChEBI" id="CHEBI:83900"/>
    </ligand>
</feature>
<feature type="binding site" evidence="1">
    <location>
        <begin position="126"/>
        <end position="132"/>
    </location>
    <ligand>
        <name>ATP</name>
        <dbReference type="ChEBI" id="CHEBI:30616"/>
    </ligand>
</feature>
<feature type="binding site" evidence="1">
    <location>
        <begin position="168"/>
        <end position="169"/>
    </location>
    <ligand>
        <name>UDP-N-acetyl-alpha-D-muramoyl-L-alanyl-D-glutamate</name>
        <dbReference type="ChEBI" id="CHEBI:83900"/>
    </ligand>
</feature>
<feature type="binding site" evidence="1">
    <location>
        <position position="195"/>
    </location>
    <ligand>
        <name>UDP-N-acetyl-alpha-D-muramoyl-L-alanyl-D-glutamate</name>
        <dbReference type="ChEBI" id="CHEBI:83900"/>
    </ligand>
</feature>
<feature type="binding site" evidence="1">
    <location>
        <position position="201"/>
    </location>
    <ligand>
        <name>UDP-N-acetyl-alpha-D-muramoyl-L-alanyl-D-glutamate</name>
        <dbReference type="ChEBI" id="CHEBI:83900"/>
    </ligand>
</feature>
<feature type="binding site" evidence="1">
    <location>
        <position position="203"/>
    </location>
    <ligand>
        <name>UDP-N-acetyl-alpha-D-muramoyl-L-alanyl-D-glutamate</name>
        <dbReference type="ChEBI" id="CHEBI:83900"/>
    </ligand>
</feature>
<feature type="binding site" evidence="1">
    <location>
        <position position="399"/>
    </location>
    <ligand>
        <name>meso-2,6-diaminopimelate</name>
        <dbReference type="ChEBI" id="CHEBI:57791"/>
    </ligand>
</feature>
<feature type="binding site" evidence="1">
    <location>
        <begin position="423"/>
        <end position="426"/>
    </location>
    <ligand>
        <name>meso-2,6-diaminopimelate</name>
        <dbReference type="ChEBI" id="CHEBI:57791"/>
    </ligand>
</feature>
<feature type="binding site" evidence="1">
    <location>
        <position position="474"/>
    </location>
    <ligand>
        <name>meso-2,6-diaminopimelate</name>
        <dbReference type="ChEBI" id="CHEBI:57791"/>
    </ligand>
</feature>
<feature type="binding site" evidence="1">
    <location>
        <position position="478"/>
    </location>
    <ligand>
        <name>meso-2,6-diaminopimelate</name>
        <dbReference type="ChEBI" id="CHEBI:57791"/>
    </ligand>
</feature>
<feature type="modified residue" description="N6-carboxylysine" evidence="1">
    <location>
        <position position="235"/>
    </location>
</feature>
<dbReference type="EC" id="6.3.2.13" evidence="1"/>
<dbReference type="EMBL" id="BA000022">
    <property type="protein sequence ID" value="BAA10815.1"/>
    <property type="molecule type" value="Genomic_DNA"/>
</dbReference>
<dbReference type="PIR" id="S75968">
    <property type="entry name" value="S75968"/>
</dbReference>
<dbReference type="SMR" id="Q55469"/>
<dbReference type="FunCoup" id="Q55469">
    <property type="interactions" value="434"/>
</dbReference>
<dbReference type="IntAct" id="Q55469">
    <property type="interactions" value="2"/>
</dbReference>
<dbReference type="STRING" id="1148.gene:10500319"/>
<dbReference type="PaxDb" id="1148-1001328"/>
<dbReference type="EnsemblBacteria" id="BAA10815">
    <property type="protein sequence ID" value="BAA10815"/>
    <property type="gene ID" value="BAA10815"/>
</dbReference>
<dbReference type="KEGG" id="syn:slr0528"/>
<dbReference type="eggNOG" id="COG0769">
    <property type="taxonomic scope" value="Bacteria"/>
</dbReference>
<dbReference type="InParanoid" id="Q55469"/>
<dbReference type="PhylomeDB" id="Q55469"/>
<dbReference type="UniPathway" id="UPA00219"/>
<dbReference type="Proteomes" id="UP000001425">
    <property type="component" value="Chromosome"/>
</dbReference>
<dbReference type="GO" id="GO:0005737">
    <property type="term" value="C:cytoplasm"/>
    <property type="evidence" value="ECO:0007669"/>
    <property type="project" value="UniProtKB-SubCell"/>
</dbReference>
<dbReference type="GO" id="GO:0005524">
    <property type="term" value="F:ATP binding"/>
    <property type="evidence" value="ECO:0007669"/>
    <property type="project" value="UniProtKB-UniRule"/>
</dbReference>
<dbReference type="GO" id="GO:0000287">
    <property type="term" value="F:magnesium ion binding"/>
    <property type="evidence" value="ECO:0007669"/>
    <property type="project" value="UniProtKB-UniRule"/>
</dbReference>
<dbReference type="GO" id="GO:0008765">
    <property type="term" value="F:UDP-N-acetylmuramoylalanyl-D-glutamate-2,6-diaminopimelate ligase activity"/>
    <property type="evidence" value="ECO:0007669"/>
    <property type="project" value="UniProtKB-UniRule"/>
</dbReference>
<dbReference type="GO" id="GO:0051301">
    <property type="term" value="P:cell division"/>
    <property type="evidence" value="ECO:0007669"/>
    <property type="project" value="UniProtKB-KW"/>
</dbReference>
<dbReference type="GO" id="GO:0071555">
    <property type="term" value="P:cell wall organization"/>
    <property type="evidence" value="ECO:0007669"/>
    <property type="project" value="UniProtKB-KW"/>
</dbReference>
<dbReference type="GO" id="GO:0009252">
    <property type="term" value="P:peptidoglycan biosynthetic process"/>
    <property type="evidence" value="ECO:0007669"/>
    <property type="project" value="UniProtKB-UniRule"/>
</dbReference>
<dbReference type="GO" id="GO:0008360">
    <property type="term" value="P:regulation of cell shape"/>
    <property type="evidence" value="ECO:0007669"/>
    <property type="project" value="UniProtKB-KW"/>
</dbReference>
<dbReference type="FunFam" id="3.90.190.20:FF:000006">
    <property type="entry name" value="UDP-N-acetylmuramoyl-L-alanyl-D-glutamate--2,6-diaminopimelate ligase"/>
    <property type="match status" value="1"/>
</dbReference>
<dbReference type="Gene3D" id="3.90.190.20">
    <property type="entry name" value="Mur ligase, C-terminal domain"/>
    <property type="match status" value="1"/>
</dbReference>
<dbReference type="Gene3D" id="3.40.1190.10">
    <property type="entry name" value="Mur-like, catalytic domain"/>
    <property type="match status" value="1"/>
</dbReference>
<dbReference type="Gene3D" id="3.40.1390.10">
    <property type="entry name" value="MurE/MurF, N-terminal domain"/>
    <property type="match status" value="1"/>
</dbReference>
<dbReference type="HAMAP" id="MF_00208">
    <property type="entry name" value="MurE"/>
    <property type="match status" value="1"/>
</dbReference>
<dbReference type="InterPro" id="IPR036565">
    <property type="entry name" value="Mur-like_cat_sf"/>
</dbReference>
<dbReference type="InterPro" id="IPR004101">
    <property type="entry name" value="Mur_ligase_C"/>
</dbReference>
<dbReference type="InterPro" id="IPR036615">
    <property type="entry name" value="Mur_ligase_C_dom_sf"/>
</dbReference>
<dbReference type="InterPro" id="IPR013221">
    <property type="entry name" value="Mur_ligase_cen"/>
</dbReference>
<dbReference type="InterPro" id="IPR000713">
    <property type="entry name" value="Mur_ligase_N"/>
</dbReference>
<dbReference type="InterPro" id="IPR035911">
    <property type="entry name" value="MurE/MurF_N"/>
</dbReference>
<dbReference type="InterPro" id="IPR005761">
    <property type="entry name" value="UDP-N-AcMur-Glu-dNH2Pim_ligase"/>
</dbReference>
<dbReference type="NCBIfam" id="TIGR01085">
    <property type="entry name" value="murE"/>
    <property type="match status" value="1"/>
</dbReference>
<dbReference type="NCBIfam" id="NF001124">
    <property type="entry name" value="PRK00139.1-2"/>
    <property type="match status" value="1"/>
</dbReference>
<dbReference type="NCBIfam" id="NF001126">
    <property type="entry name" value="PRK00139.1-4"/>
    <property type="match status" value="1"/>
</dbReference>
<dbReference type="PANTHER" id="PTHR23135">
    <property type="entry name" value="MUR LIGASE FAMILY MEMBER"/>
    <property type="match status" value="1"/>
</dbReference>
<dbReference type="PANTHER" id="PTHR23135:SF4">
    <property type="entry name" value="UDP-N-ACETYLMURAMOYL-L-ALANYL-D-GLUTAMATE--2,6-DIAMINOPIMELATE LIGASE MURE HOMOLOG, CHLOROPLASTIC"/>
    <property type="match status" value="1"/>
</dbReference>
<dbReference type="Pfam" id="PF01225">
    <property type="entry name" value="Mur_ligase"/>
    <property type="match status" value="1"/>
</dbReference>
<dbReference type="Pfam" id="PF02875">
    <property type="entry name" value="Mur_ligase_C"/>
    <property type="match status" value="1"/>
</dbReference>
<dbReference type="Pfam" id="PF08245">
    <property type="entry name" value="Mur_ligase_M"/>
    <property type="match status" value="1"/>
</dbReference>
<dbReference type="SUPFAM" id="SSF53623">
    <property type="entry name" value="MurD-like peptide ligases, catalytic domain"/>
    <property type="match status" value="1"/>
</dbReference>
<dbReference type="SUPFAM" id="SSF53244">
    <property type="entry name" value="MurD-like peptide ligases, peptide-binding domain"/>
    <property type="match status" value="1"/>
</dbReference>
<dbReference type="SUPFAM" id="SSF63418">
    <property type="entry name" value="MurE/MurF N-terminal domain"/>
    <property type="match status" value="1"/>
</dbReference>
<organism>
    <name type="scientific">Synechocystis sp. (strain ATCC 27184 / PCC 6803 / Kazusa)</name>
    <dbReference type="NCBI Taxonomy" id="1111708"/>
    <lineage>
        <taxon>Bacteria</taxon>
        <taxon>Bacillati</taxon>
        <taxon>Cyanobacteriota</taxon>
        <taxon>Cyanophyceae</taxon>
        <taxon>Synechococcales</taxon>
        <taxon>Merismopediaceae</taxon>
        <taxon>Synechocystis</taxon>
    </lineage>
</organism>
<protein>
    <recommendedName>
        <fullName evidence="1">UDP-N-acetylmuramoyl-L-alanyl-D-glutamate--2,6-diaminopimelate ligase</fullName>
        <ecNumber evidence="1">6.3.2.13</ecNumber>
    </recommendedName>
    <alternativeName>
        <fullName evidence="1">Meso-A2pm-adding enzyme</fullName>
    </alternativeName>
    <alternativeName>
        <fullName evidence="1">Meso-diaminopimelate-adding enzyme</fullName>
    </alternativeName>
    <alternativeName>
        <fullName evidence="1">UDP-MurNAc-L-Ala-D-Glu:meso-diaminopimelate ligase</fullName>
    </alternativeName>
    <alternativeName>
        <fullName evidence="1">UDP-MurNAc-tripeptide synthetase</fullName>
    </alternativeName>
    <alternativeName>
        <fullName evidence="1">UDP-N-acetylmuramyl-tripeptide synthetase</fullName>
    </alternativeName>
</protein>
<comment type="function">
    <text evidence="1">Catalyzes the addition of meso-diaminopimelic acid to the nucleotide precursor UDP-N-acetylmuramoyl-L-alanyl-D-glutamate (UMAG) in the biosynthesis of bacterial cell-wall peptidoglycan.</text>
</comment>
<comment type="catalytic activity">
    <reaction evidence="1">
        <text>UDP-N-acetyl-alpha-D-muramoyl-L-alanyl-D-glutamate + meso-2,6-diaminopimelate + ATP = UDP-N-acetyl-alpha-D-muramoyl-L-alanyl-gamma-D-glutamyl-meso-2,6-diaminopimelate + ADP + phosphate + H(+)</text>
        <dbReference type="Rhea" id="RHEA:23676"/>
        <dbReference type="ChEBI" id="CHEBI:15378"/>
        <dbReference type="ChEBI" id="CHEBI:30616"/>
        <dbReference type="ChEBI" id="CHEBI:43474"/>
        <dbReference type="ChEBI" id="CHEBI:57791"/>
        <dbReference type="ChEBI" id="CHEBI:83900"/>
        <dbReference type="ChEBI" id="CHEBI:83905"/>
        <dbReference type="ChEBI" id="CHEBI:456216"/>
        <dbReference type="EC" id="6.3.2.13"/>
    </reaction>
</comment>
<comment type="cofactor">
    <cofactor evidence="1">
        <name>Mg(2+)</name>
        <dbReference type="ChEBI" id="CHEBI:18420"/>
    </cofactor>
</comment>
<comment type="pathway">
    <text evidence="1">Cell wall biogenesis; peptidoglycan biosynthesis.</text>
</comment>
<comment type="subcellular location">
    <subcellularLocation>
        <location evidence="1">Cytoplasm</location>
    </subcellularLocation>
</comment>
<comment type="PTM">
    <text evidence="1">Carboxylation is probably crucial for Mg(2+) binding and, consequently, for the gamma-phosphate positioning of ATP.</text>
</comment>
<comment type="similarity">
    <text evidence="1">Belongs to the MurCDEF family. MurE subfamily.</text>
</comment>
<evidence type="ECO:0000255" key="1">
    <source>
        <dbReference type="HAMAP-Rule" id="MF_00208"/>
    </source>
</evidence>
<proteinExistence type="inferred from homology"/>
<sequence length="505" mass="54601">MVKLGQLLASVPEVVAAAPWLAQESDRCPALGKIVTGLSTNSHACPPGTLFIGMPGTRVDGGEFWSGALEAGAIAAVVSEKALQKFPPQNGECVIAVPDLVPVCAGLAAAFYQHPAQTLQLVGVTGTNGKTTTSHLIEYFLNQQQRSSALLGTLYTRWPGYQKTATHTTPFATDLQKQLAEALQAGNQYAVMEVSSHALAQGRVLQCGFACAVFTNLTQDHLDFHGTMENYFAAKALLFKESYLQGRAVINQDDPYGQRLIDRLPLDQVYTYSVNDSTADFYTKDLDYQPTGVKGTFVTPQGEFPFLSPLVGQFNLANVLAAIASGLHLGLDPAAMVKDLLDFPGVPGRMEQVQIRPDQDISVMVDYAHTPDSLENALKAARPFIPGRLICIFGCGGDRDRTKRPLMGNIAAQLADLAVVTSDNPRTEDPEQILADVVQGISLDIEPWIIGDRATAIHKAIREAKPGDGVLIAGKGHEDYQILGTEKIHFDDREQAREALILRYS</sequence>
<name>MURE_SYNY3</name>
<reference key="1">
    <citation type="journal article" date="1995" name="DNA Res.">
        <title>Sequence analysis of the genome of the unicellular cyanobacterium Synechocystis sp. strain PCC6803. I. Sequence features in the 1 Mb region from map positions 64% to 92% of the genome.</title>
        <authorList>
            <person name="Kaneko T."/>
            <person name="Tanaka A."/>
            <person name="Sato S."/>
            <person name="Kotani H."/>
            <person name="Sazuka T."/>
            <person name="Miyajima N."/>
            <person name="Sugiura M."/>
            <person name="Tabata S."/>
        </authorList>
    </citation>
    <scope>NUCLEOTIDE SEQUENCE [LARGE SCALE GENOMIC DNA]</scope>
    <source>
        <strain>ATCC 27184 / PCC 6803 / N-1</strain>
    </source>
</reference>
<reference key="2">
    <citation type="journal article" date="1996" name="DNA Res.">
        <title>Sequence analysis of the genome of the unicellular cyanobacterium Synechocystis sp. strain PCC6803. II. Sequence determination of the entire genome and assignment of potential protein-coding regions.</title>
        <authorList>
            <person name="Kaneko T."/>
            <person name="Sato S."/>
            <person name="Kotani H."/>
            <person name="Tanaka A."/>
            <person name="Asamizu E."/>
            <person name="Nakamura Y."/>
            <person name="Miyajima N."/>
            <person name="Hirosawa M."/>
            <person name="Sugiura M."/>
            <person name="Sasamoto S."/>
            <person name="Kimura T."/>
            <person name="Hosouchi T."/>
            <person name="Matsuno A."/>
            <person name="Muraki A."/>
            <person name="Nakazaki N."/>
            <person name="Naruo K."/>
            <person name="Okumura S."/>
            <person name="Shimpo S."/>
            <person name="Takeuchi C."/>
            <person name="Wada T."/>
            <person name="Watanabe A."/>
            <person name="Yamada M."/>
            <person name="Yasuda M."/>
            <person name="Tabata S."/>
        </authorList>
    </citation>
    <scope>NUCLEOTIDE SEQUENCE [LARGE SCALE GENOMIC DNA]</scope>
    <source>
        <strain>ATCC 27184 / PCC 6803 / Kazusa</strain>
    </source>
</reference>
<keyword id="KW-0067">ATP-binding</keyword>
<keyword id="KW-0131">Cell cycle</keyword>
<keyword id="KW-0132">Cell division</keyword>
<keyword id="KW-0133">Cell shape</keyword>
<keyword id="KW-0961">Cell wall biogenesis/degradation</keyword>
<keyword id="KW-0963">Cytoplasm</keyword>
<keyword id="KW-0436">Ligase</keyword>
<keyword id="KW-0460">Magnesium</keyword>
<keyword id="KW-0547">Nucleotide-binding</keyword>
<keyword id="KW-0573">Peptidoglycan synthesis</keyword>
<keyword id="KW-1185">Reference proteome</keyword>
<gene>
    <name evidence="1" type="primary">murE</name>
    <name type="ordered locus">slr0528</name>
</gene>